<accession>Q5VV63</accession>
<accession>O60283</accession>
<accession>Q5JSE8</accession>
<accession>Q5T5Y9</accession>
<accession>Q6T256</accession>
<accession>Q6ZSN4</accession>
<accession>Q86WX2</accession>
<feature type="signal peptide" evidence="2">
    <location>
        <begin position="1"/>
        <end position="52"/>
    </location>
</feature>
<feature type="chain" id="PRO_0000334650" description="Attractin-like protein 1">
    <location>
        <begin position="53"/>
        <end position="1379"/>
    </location>
</feature>
<feature type="topological domain" description="Extracellular" evidence="2">
    <location>
        <begin position="53"/>
        <end position="1230"/>
    </location>
</feature>
<feature type="transmembrane region" description="Helical" evidence="2">
    <location>
        <begin position="1231"/>
        <end position="1251"/>
    </location>
</feature>
<feature type="topological domain" description="Cytoplasmic" evidence="2">
    <location>
        <begin position="1252"/>
        <end position="1379"/>
    </location>
</feature>
<feature type="domain" description="EGF-like 1" evidence="5">
    <location>
        <begin position="53"/>
        <end position="91"/>
    </location>
</feature>
<feature type="domain" description="CUB" evidence="4">
    <location>
        <begin position="93"/>
        <end position="209"/>
    </location>
</feature>
<feature type="domain" description="EGF-like 2" evidence="5">
    <location>
        <begin position="207"/>
        <end position="245"/>
    </location>
</feature>
<feature type="repeat" description="Kelch 1">
    <location>
        <begin position="316"/>
        <end position="365"/>
    </location>
</feature>
<feature type="repeat" description="Kelch 2">
    <location>
        <begin position="367"/>
        <end position="415"/>
    </location>
</feature>
<feature type="repeat" description="Kelch 3">
    <location>
        <begin position="427"/>
        <end position="475"/>
    </location>
</feature>
<feature type="repeat" description="Kelch 4">
    <location>
        <begin position="480"/>
        <end position="531"/>
    </location>
</feature>
<feature type="repeat" description="Kelch 5">
    <location>
        <begin position="533"/>
        <end position="591"/>
    </location>
</feature>
<feature type="repeat" description="Kelch 6">
    <location>
        <begin position="592"/>
        <end position="638"/>
    </location>
</feature>
<feature type="domain" description="PSI 1">
    <location>
        <begin position="614"/>
        <end position="657"/>
    </location>
</feature>
<feature type="domain" description="PSI 2">
    <location>
        <begin position="666"/>
        <end position="709"/>
    </location>
</feature>
<feature type="domain" description="PSI 3">
    <location>
        <begin position="715"/>
        <end position="760"/>
    </location>
</feature>
<feature type="domain" description="C-type lectin" evidence="3">
    <location>
        <begin position="755"/>
        <end position="873"/>
    </location>
</feature>
<feature type="domain" description="PSI 4">
    <location>
        <begin position="889"/>
        <end position="939"/>
    </location>
</feature>
<feature type="domain" description="PSI 5">
    <location>
        <begin position="942"/>
        <end position="1012"/>
    </location>
</feature>
<feature type="domain" description="Laminin EGF-like 1" evidence="6">
    <location>
        <begin position="1014"/>
        <end position="1059"/>
    </location>
</feature>
<feature type="domain" description="Laminin EGF-like 2" evidence="6">
    <location>
        <begin position="1060"/>
        <end position="1108"/>
    </location>
</feature>
<feature type="region of interest" description="Disordered" evidence="7">
    <location>
        <begin position="1"/>
        <end position="23"/>
    </location>
</feature>
<feature type="region of interest" description="Disordered" evidence="7">
    <location>
        <begin position="1354"/>
        <end position="1379"/>
    </location>
</feature>
<feature type="glycosylation site" description="N-linked (GlcNAc...) asparagine" evidence="2">
    <location>
        <position position="76"/>
    </location>
</feature>
<feature type="glycosylation site" description="N-linked (GlcNAc...) asparagine" evidence="2">
    <location>
        <position position="174"/>
    </location>
</feature>
<feature type="glycosylation site" description="N-linked (GlcNAc...) asparagine" evidence="2">
    <location>
        <position position="198"/>
    </location>
</feature>
<feature type="glycosylation site" description="N-linked (GlcNAc...) asparagine" evidence="2">
    <location>
        <position position="380"/>
    </location>
</feature>
<feature type="glycosylation site" description="N-linked (GlcNAc...) asparagine" evidence="2">
    <location>
        <position position="763"/>
    </location>
</feature>
<feature type="glycosylation site" description="N-linked (GlcNAc...) asparagine" evidence="2">
    <location>
        <position position="778"/>
    </location>
</feature>
<feature type="glycosylation site" description="N-linked (GlcNAc...) asparagine" evidence="2">
    <location>
        <position position="898"/>
    </location>
</feature>
<feature type="glycosylation site" description="N-linked (GlcNAc...) asparagine" evidence="2">
    <location>
        <position position="1157"/>
    </location>
</feature>
<feature type="disulfide bond" evidence="1">
    <location>
        <begin position="63"/>
        <end position="79"/>
    </location>
</feature>
<feature type="disulfide bond" evidence="1">
    <location>
        <begin position="81"/>
        <end position="90"/>
    </location>
</feature>
<feature type="disulfide bond" evidence="1">
    <location>
        <begin position="93"/>
        <end position="119"/>
    </location>
</feature>
<feature type="disulfide bond" evidence="1">
    <location>
        <begin position="211"/>
        <end position="221"/>
    </location>
</feature>
<feature type="disulfide bond" evidence="1">
    <location>
        <begin position="215"/>
        <end position="233"/>
    </location>
</feature>
<feature type="disulfide bond" evidence="1">
    <location>
        <begin position="235"/>
        <end position="244"/>
    </location>
</feature>
<feature type="disulfide bond" evidence="1">
    <location>
        <begin position="776"/>
        <end position="872"/>
    </location>
</feature>
<feature type="disulfide bond" evidence="1">
    <location>
        <begin position="1014"/>
        <end position="1022"/>
    </location>
</feature>
<feature type="disulfide bond" evidence="1">
    <location>
        <begin position="1016"/>
        <end position="1028"/>
    </location>
</feature>
<feature type="disulfide bond" evidence="1">
    <location>
        <begin position="1031"/>
        <end position="1040"/>
    </location>
</feature>
<feature type="disulfide bond" evidence="1">
    <location>
        <begin position="1043"/>
        <end position="1057"/>
    </location>
</feature>
<feature type="disulfide bond" evidence="1">
    <location>
        <begin position="1060"/>
        <end position="1069"/>
    </location>
</feature>
<feature type="disulfide bond" evidence="1">
    <location>
        <begin position="1062"/>
        <end position="1076"/>
    </location>
</feature>
<feature type="disulfide bond" evidence="1">
    <location>
        <begin position="1078"/>
        <end position="1088"/>
    </location>
</feature>
<feature type="disulfide bond" evidence="1">
    <location>
        <begin position="1091"/>
        <end position="1106"/>
    </location>
</feature>
<feature type="splice variant" id="VSP_033718" description="In isoform 2." evidence="10">
    <original>SSNTWLVPETKGAIVQGG</original>
    <variation>CELLKNCNFFIDWECFSL</variation>
    <location>
        <begin position="450"/>
        <end position="467"/>
    </location>
</feature>
<feature type="splice variant" id="VSP_033719" description="In isoform 2." evidence="10">
    <location>
        <begin position="468"/>
        <end position="1379"/>
    </location>
</feature>
<feature type="sequence variant" id="VAR_043446" description="In dbSNP:rs1953758." evidence="8 9">
    <original>S</original>
    <variation>N</variation>
    <location>
        <position position="989"/>
    </location>
</feature>
<protein>
    <recommendedName>
        <fullName>Attractin-like protein 1</fullName>
    </recommendedName>
</protein>
<evidence type="ECO:0000250" key="1"/>
<evidence type="ECO:0000255" key="2"/>
<evidence type="ECO:0000255" key="3">
    <source>
        <dbReference type="PROSITE-ProRule" id="PRU00040"/>
    </source>
</evidence>
<evidence type="ECO:0000255" key="4">
    <source>
        <dbReference type="PROSITE-ProRule" id="PRU00059"/>
    </source>
</evidence>
<evidence type="ECO:0000255" key="5">
    <source>
        <dbReference type="PROSITE-ProRule" id="PRU00076"/>
    </source>
</evidence>
<evidence type="ECO:0000255" key="6">
    <source>
        <dbReference type="PROSITE-ProRule" id="PRU00460"/>
    </source>
</evidence>
<evidence type="ECO:0000256" key="7">
    <source>
        <dbReference type="SAM" id="MobiDB-lite"/>
    </source>
</evidence>
<evidence type="ECO:0000269" key="8">
    <source>
    </source>
</evidence>
<evidence type="ECO:0000269" key="9">
    <source>
    </source>
</evidence>
<evidence type="ECO:0000303" key="10">
    <source>
    </source>
</evidence>
<evidence type="ECO:0000305" key="11"/>
<gene>
    <name type="primary">ATRNL1</name>
    <name type="synonym">KIAA0534</name>
</gene>
<name>ATRN1_HUMAN</name>
<proteinExistence type="evidence at protein level"/>
<dbReference type="EMBL" id="AY442317">
    <property type="protein sequence ID" value="AAR14297.1"/>
    <property type="molecule type" value="mRNA"/>
</dbReference>
<dbReference type="EMBL" id="AC022542">
    <property type="status" value="NOT_ANNOTATED_CDS"/>
    <property type="molecule type" value="Genomic_DNA"/>
</dbReference>
<dbReference type="EMBL" id="AC091667">
    <property type="status" value="NOT_ANNOTATED_CDS"/>
    <property type="molecule type" value="Genomic_DNA"/>
</dbReference>
<dbReference type="EMBL" id="AL355530">
    <property type="status" value="NOT_ANNOTATED_CDS"/>
    <property type="molecule type" value="Genomic_DNA"/>
</dbReference>
<dbReference type="EMBL" id="AL356100">
    <property type="status" value="NOT_ANNOTATED_CDS"/>
    <property type="molecule type" value="Genomic_DNA"/>
</dbReference>
<dbReference type="EMBL" id="AL357059">
    <property type="status" value="NOT_ANNOTATED_CDS"/>
    <property type="molecule type" value="Genomic_DNA"/>
</dbReference>
<dbReference type="EMBL" id="AL392087">
    <property type="status" value="NOT_ANNOTATED_CDS"/>
    <property type="molecule type" value="Genomic_DNA"/>
</dbReference>
<dbReference type="EMBL" id="AL512304">
    <property type="status" value="NOT_ANNOTATED_CDS"/>
    <property type="molecule type" value="Genomic_DNA"/>
</dbReference>
<dbReference type="EMBL" id="BC047716">
    <property type="protein sequence ID" value="AAH47716.1"/>
    <property type="molecule type" value="mRNA"/>
</dbReference>
<dbReference type="EMBL" id="BC139916">
    <property type="protein sequence ID" value="AAI39917.1"/>
    <property type="molecule type" value="mRNA"/>
</dbReference>
<dbReference type="EMBL" id="BC139923">
    <property type="protein sequence ID" value="AAI39924.1"/>
    <property type="molecule type" value="mRNA"/>
</dbReference>
<dbReference type="EMBL" id="AK127277">
    <property type="protein sequence ID" value="BAC86914.1"/>
    <property type="status" value="ALT_INIT"/>
    <property type="molecule type" value="mRNA"/>
</dbReference>
<dbReference type="EMBL" id="AB011106">
    <property type="protein sequence ID" value="BAA25460.2"/>
    <property type="molecule type" value="mRNA"/>
</dbReference>
<dbReference type="CCDS" id="CCDS73204.1">
    <molecule id="Q5VV63-2"/>
</dbReference>
<dbReference type="CCDS" id="CCDS7592.1">
    <molecule id="Q5VV63-1"/>
</dbReference>
<dbReference type="PIR" id="T00266">
    <property type="entry name" value="T00266"/>
</dbReference>
<dbReference type="RefSeq" id="NP_001263211.1">
    <molecule id="Q5VV63-2"/>
    <property type="nucleotide sequence ID" value="NM_001276282.4"/>
</dbReference>
<dbReference type="RefSeq" id="NP_997186.1">
    <molecule id="Q5VV63-1"/>
    <property type="nucleotide sequence ID" value="NM_207303.4"/>
</dbReference>
<dbReference type="SMR" id="Q5VV63"/>
<dbReference type="BioGRID" id="117499">
    <property type="interactions" value="10"/>
</dbReference>
<dbReference type="FunCoup" id="Q5VV63">
    <property type="interactions" value="922"/>
</dbReference>
<dbReference type="IntAct" id="Q5VV63">
    <property type="interactions" value="12"/>
</dbReference>
<dbReference type="MINT" id="Q5VV63"/>
<dbReference type="STRING" id="9606.ENSP00000347152"/>
<dbReference type="GlyCosmos" id="Q5VV63">
    <property type="glycosylation" value="8 sites, No reported glycans"/>
</dbReference>
<dbReference type="GlyGen" id="Q5VV63">
    <property type="glycosylation" value="8 sites"/>
</dbReference>
<dbReference type="iPTMnet" id="Q5VV63"/>
<dbReference type="PhosphoSitePlus" id="Q5VV63"/>
<dbReference type="SwissPalm" id="Q5VV63"/>
<dbReference type="BioMuta" id="ATRNL1"/>
<dbReference type="DMDM" id="189081675"/>
<dbReference type="MassIVE" id="Q5VV63"/>
<dbReference type="PaxDb" id="9606-ENSP00000347152"/>
<dbReference type="PeptideAtlas" id="Q5VV63"/>
<dbReference type="ProteomicsDB" id="65449">
    <molecule id="Q5VV63-1"/>
</dbReference>
<dbReference type="ProteomicsDB" id="65450">
    <molecule id="Q5VV63-2"/>
</dbReference>
<dbReference type="Antibodypedia" id="52380">
    <property type="antibodies" value="29 antibodies from 12 providers"/>
</dbReference>
<dbReference type="DNASU" id="26033"/>
<dbReference type="Ensembl" id="ENST00000355044.8">
    <molecule id="Q5VV63-1"/>
    <property type="protein sequence ID" value="ENSP00000347152.3"/>
    <property type="gene ID" value="ENSG00000107518.18"/>
</dbReference>
<dbReference type="Ensembl" id="ENST00000609571.5">
    <molecule id="Q5VV63-2"/>
    <property type="protein sequence ID" value="ENSP00000476902.2"/>
    <property type="gene ID" value="ENSG00000107518.18"/>
</dbReference>
<dbReference type="GeneID" id="26033"/>
<dbReference type="KEGG" id="hsa:26033"/>
<dbReference type="MANE-Select" id="ENST00000355044.8">
    <property type="protein sequence ID" value="ENSP00000347152.3"/>
    <property type="RefSeq nucleotide sequence ID" value="NM_207303.4"/>
    <property type="RefSeq protein sequence ID" value="NP_997186.1"/>
</dbReference>
<dbReference type="UCSC" id="uc001lcg.4">
    <molecule id="Q5VV63-1"/>
    <property type="organism name" value="human"/>
</dbReference>
<dbReference type="AGR" id="HGNC:29063"/>
<dbReference type="CTD" id="26033"/>
<dbReference type="DisGeNET" id="26033"/>
<dbReference type="GeneCards" id="ATRNL1"/>
<dbReference type="HGNC" id="HGNC:29063">
    <property type="gene designation" value="ATRNL1"/>
</dbReference>
<dbReference type="HPA" id="ENSG00000107518">
    <property type="expression patterns" value="Tissue enhanced (brain)"/>
</dbReference>
<dbReference type="MIM" id="612869">
    <property type="type" value="gene"/>
</dbReference>
<dbReference type="neXtProt" id="NX_Q5VV63"/>
<dbReference type="OpenTargets" id="ENSG00000107518"/>
<dbReference type="PharmGKB" id="PA134961599"/>
<dbReference type="VEuPathDB" id="HostDB:ENSG00000107518"/>
<dbReference type="eggNOG" id="KOG1388">
    <property type="taxonomic scope" value="Eukaryota"/>
</dbReference>
<dbReference type="GeneTree" id="ENSGT00940000155790"/>
<dbReference type="HOGENOM" id="CLU_046715_0_0_1"/>
<dbReference type="InParanoid" id="Q5VV63"/>
<dbReference type="OMA" id="CSMSVRN"/>
<dbReference type="OrthoDB" id="9998912at2759"/>
<dbReference type="PAN-GO" id="Q5VV63">
    <property type="GO annotations" value="5 GO annotations based on evolutionary models"/>
</dbReference>
<dbReference type="PhylomeDB" id="Q5VV63"/>
<dbReference type="TreeFam" id="TF321873"/>
<dbReference type="PathwayCommons" id="Q5VV63"/>
<dbReference type="SignaLink" id="Q5VV63"/>
<dbReference type="BioGRID-ORCS" id="26033">
    <property type="hits" value="9 hits in 1145 CRISPR screens"/>
</dbReference>
<dbReference type="ChiTaRS" id="ATRNL1">
    <property type="organism name" value="human"/>
</dbReference>
<dbReference type="GenomeRNAi" id="26033"/>
<dbReference type="Pharos" id="Q5VV63">
    <property type="development level" value="Tdark"/>
</dbReference>
<dbReference type="PRO" id="PR:Q5VV63"/>
<dbReference type="Proteomes" id="UP000005640">
    <property type="component" value="Chromosome 10"/>
</dbReference>
<dbReference type="RNAct" id="Q5VV63">
    <property type="molecule type" value="protein"/>
</dbReference>
<dbReference type="Bgee" id="ENSG00000107518">
    <property type="expression patterns" value="Expressed in adrenal tissue and 140 other cell types or tissues"/>
</dbReference>
<dbReference type="ExpressionAtlas" id="Q5VV63">
    <property type="expression patterns" value="baseline and differential"/>
</dbReference>
<dbReference type="GO" id="GO:0016020">
    <property type="term" value="C:membrane"/>
    <property type="evidence" value="ECO:0007669"/>
    <property type="project" value="UniProtKB-SubCell"/>
</dbReference>
<dbReference type="GO" id="GO:0030246">
    <property type="term" value="F:carbohydrate binding"/>
    <property type="evidence" value="ECO:0007669"/>
    <property type="project" value="UniProtKB-KW"/>
</dbReference>
<dbReference type="GO" id="GO:0005112">
    <property type="term" value="F:Notch binding"/>
    <property type="evidence" value="ECO:0000318"/>
    <property type="project" value="GO_Central"/>
</dbReference>
<dbReference type="GO" id="GO:0007186">
    <property type="term" value="P:G protein-coupled receptor signaling pathway"/>
    <property type="evidence" value="ECO:0007669"/>
    <property type="project" value="Ensembl"/>
</dbReference>
<dbReference type="CDD" id="cd03597">
    <property type="entry name" value="CLECT_attractin_like"/>
    <property type="match status" value="1"/>
</dbReference>
<dbReference type="CDD" id="cd00041">
    <property type="entry name" value="CUB"/>
    <property type="match status" value="1"/>
</dbReference>
<dbReference type="CDD" id="cd00055">
    <property type="entry name" value="EGF_Lam"/>
    <property type="match status" value="1"/>
</dbReference>
<dbReference type="FunFam" id="2.10.25.10:FF:000860">
    <property type="entry name" value="Attractin"/>
    <property type="match status" value="1"/>
</dbReference>
<dbReference type="FunFam" id="2.10.25.10:FF:000079">
    <property type="entry name" value="Attractin like 1"/>
    <property type="match status" value="1"/>
</dbReference>
<dbReference type="FunFam" id="2.120.10.80:FF:000022">
    <property type="entry name" value="Attractin like 1"/>
    <property type="match status" value="1"/>
</dbReference>
<dbReference type="FunFam" id="2.120.10.80:FF:000116">
    <property type="entry name" value="Attractin like 1"/>
    <property type="match status" value="1"/>
</dbReference>
<dbReference type="FunFam" id="2.60.120.290:FF:000008">
    <property type="entry name" value="Attractin like 1"/>
    <property type="match status" value="1"/>
</dbReference>
<dbReference type="FunFam" id="3.10.100.10:FF:000013">
    <property type="entry name" value="Attractin like 1"/>
    <property type="match status" value="1"/>
</dbReference>
<dbReference type="Gene3D" id="2.120.10.80">
    <property type="entry name" value="Kelch-type beta propeller"/>
    <property type="match status" value="2"/>
</dbReference>
<dbReference type="Gene3D" id="2.10.25.10">
    <property type="entry name" value="Laminin"/>
    <property type="match status" value="2"/>
</dbReference>
<dbReference type="Gene3D" id="3.10.100.10">
    <property type="entry name" value="Mannose-Binding Protein A, subunit A"/>
    <property type="match status" value="1"/>
</dbReference>
<dbReference type="Gene3D" id="2.60.120.290">
    <property type="entry name" value="Spermadhesin, CUB domain"/>
    <property type="match status" value="1"/>
</dbReference>
<dbReference type="InterPro" id="IPR034011">
    <property type="entry name" value="Attractin-like_CTLD"/>
</dbReference>
<dbReference type="InterPro" id="IPR056737">
    <property type="entry name" value="Beta-prop_ATRN-MKLN-like"/>
</dbReference>
<dbReference type="InterPro" id="IPR001304">
    <property type="entry name" value="C-type_lectin-like"/>
</dbReference>
<dbReference type="InterPro" id="IPR016186">
    <property type="entry name" value="C-type_lectin-like/link_sf"/>
</dbReference>
<dbReference type="InterPro" id="IPR016187">
    <property type="entry name" value="CTDL_fold"/>
</dbReference>
<dbReference type="InterPro" id="IPR000859">
    <property type="entry name" value="CUB_dom"/>
</dbReference>
<dbReference type="InterPro" id="IPR000742">
    <property type="entry name" value="EGF-like_dom"/>
</dbReference>
<dbReference type="InterPro" id="IPR056732">
    <property type="entry name" value="GBD_ATRN"/>
</dbReference>
<dbReference type="InterPro" id="IPR015915">
    <property type="entry name" value="Kelch-typ_b-propeller"/>
</dbReference>
<dbReference type="InterPro" id="IPR002049">
    <property type="entry name" value="LE_dom"/>
</dbReference>
<dbReference type="InterPro" id="IPR056863">
    <property type="entry name" value="LMN_ATRN_NET-like_EGF"/>
</dbReference>
<dbReference type="InterPro" id="IPR051568">
    <property type="entry name" value="LZTR1/Attractin"/>
</dbReference>
<dbReference type="InterPro" id="IPR002165">
    <property type="entry name" value="Plexin_repeat"/>
</dbReference>
<dbReference type="InterPro" id="IPR016201">
    <property type="entry name" value="PSI"/>
</dbReference>
<dbReference type="InterPro" id="IPR035914">
    <property type="entry name" value="Sperma_CUB_dom_sf"/>
</dbReference>
<dbReference type="PANTHER" id="PTHR46376:SF4">
    <property type="entry name" value="ATTRACTIN-LIKE PROTEIN 1"/>
    <property type="match status" value="1"/>
</dbReference>
<dbReference type="PANTHER" id="PTHR46376">
    <property type="entry name" value="LEUCINE-ZIPPER-LIKE TRANSCRIPTIONAL REGULATOR 1"/>
    <property type="match status" value="1"/>
</dbReference>
<dbReference type="Pfam" id="PF24981">
    <property type="entry name" value="Beta-prop_ATRN-LZTR1"/>
    <property type="match status" value="1"/>
</dbReference>
<dbReference type="Pfam" id="PF00431">
    <property type="entry name" value="CUB"/>
    <property type="match status" value="1"/>
</dbReference>
<dbReference type="Pfam" id="PF24973">
    <property type="entry name" value="EGF_LMN_ATRN"/>
    <property type="match status" value="1"/>
</dbReference>
<dbReference type="Pfam" id="PF23106">
    <property type="entry name" value="EGF_Teneurin"/>
    <property type="match status" value="1"/>
</dbReference>
<dbReference type="Pfam" id="PF24972">
    <property type="entry name" value="GBD_ATRN"/>
    <property type="match status" value="1"/>
</dbReference>
<dbReference type="Pfam" id="PF01437">
    <property type="entry name" value="PSI"/>
    <property type="match status" value="1"/>
</dbReference>
<dbReference type="SMART" id="SM00034">
    <property type="entry name" value="CLECT"/>
    <property type="match status" value="1"/>
</dbReference>
<dbReference type="SMART" id="SM00042">
    <property type="entry name" value="CUB"/>
    <property type="match status" value="1"/>
</dbReference>
<dbReference type="SMART" id="SM00181">
    <property type="entry name" value="EGF"/>
    <property type="match status" value="3"/>
</dbReference>
<dbReference type="SMART" id="SM00180">
    <property type="entry name" value="EGF_Lam"/>
    <property type="match status" value="2"/>
</dbReference>
<dbReference type="SMART" id="SM00423">
    <property type="entry name" value="PSI"/>
    <property type="match status" value="5"/>
</dbReference>
<dbReference type="SUPFAM" id="SSF56436">
    <property type="entry name" value="C-type lectin-like"/>
    <property type="match status" value="1"/>
</dbReference>
<dbReference type="SUPFAM" id="SSF57196">
    <property type="entry name" value="EGF/Laminin"/>
    <property type="match status" value="1"/>
</dbReference>
<dbReference type="SUPFAM" id="SSF117281">
    <property type="entry name" value="Kelch motif"/>
    <property type="match status" value="2"/>
</dbReference>
<dbReference type="SUPFAM" id="SSF49854">
    <property type="entry name" value="Spermadhesin, CUB domain"/>
    <property type="match status" value="1"/>
</dbReference>
<dbReference type="PROSITE" id="PS50041">
    <property type="entry name" value="C_TYPE_LECTIN_2"/>
    <property type="match status" value="1"/>
</dbReference>
<dbReference type="PROSITE" id="PS01180">
    <property type="entry name" value="CUB"/>
    <property type="match status" value="1"/>
</dbReference>
<dbReference type="PROSITE" id="PS00022">
    <property type="entry name" value="EGF_1"/>
    <property type="match status" value="3"/>
</dbReference>
<dbReference type="PROSITE" id="PS01186">
    <property type="entry name" value="EGF_2"/>
    <property type="match status" value="1"/>
</dbReference>
<dbReference type="PROSITE" id="PS50026">
    <property type="entry name" value="EGF_3"/>
    <property type="match status" value="2"/>
</dbReference>
<dbReference type="PROSITE" id="PS01248">
    <property type="entry name" value="EGF_LAM_1"/>
    <property type="match status" value="1"/>
</dbReference>
<dbReference type="PROSITE" id="PS50027">
    <property type="entry name" value="EGF_LAM_2"/>
    <property type="match status" value="2"/>
</dbReference>
<keyword id="KW-0025">Alternative splicing</keyword>
<keyword id="KW-1015">Disulfide bond</keyword>
<keyword id="KW-0245">EGF-like domain</keyword>
<keyword id="KW-0325">Glycoprotein</keyword>
<keyword id="KW-0880">Kelch repeat</keyword>
<keyword id="KW-0424">Laminin EGF-like domain</keyword>
<keyword id="KW-0430">Lectin</keyword>
<keyword id="KW-0472">Membrane</keyword>
<keyword id="KW-1267">Proteomics identification</keyword>
<keyword id="KW-1185">Reference proteome</keyword>
<keyword id="KW-0677">Repeat</keyword>
<keyword id="KW-0732">Signal</keyword>
<keyword id="KW-0812">Transmembrane</keyword>
<keyword id="KW-1133">Transmembrane helix</keyword>
<sequence>METGGRARTGTPQPAAPGVWRARPAGGGGGGASSWLLDGNSWLLCYGFLYLALYAQVSQSKPCERTGSCFSGRCVNSTCLCDPGWVGDQCQHCQGRFKLTEPSGYLTDGPINYKYKTKCTWLIEGYPNAVLRLRFNHFATECSWDHMYVYDGDSIYAPLIAVLSGLIVPEIRGNETVPEVVTTSGYALLHFFSDAAYNLTGFNIFYSINSCPNNCSGHGKCTTSVSVPSQVYCECDKYWKGEACDIPYCKANCGSPDHGYCDLTGEKLCVCNDSWQGPDCSLNVPSTESYWILPNVKPFSPSVGRASHKAVLHGKFMWVIGGYTFNYSSFQMVLNYNLESSIWNVGTPSRGPLQRYGHSLALYQENIFMYGGRIETNDGNVTDELWVFNIHSQSWSTKTPTVLGHGQQYAVEGHSAHIMELDSRDVVMIIIFGYSAIYGYTSSIQEYHISSNTWLVPETKGAIVQGGYGHTSVYDEITKSIYVHGGYKALPGNKYGLVDDLYKYEVNTKTWTILKESGFARYLHSAVLINGAMLIFGGNTHNDTSLSNGAKCFSADFLAYDIACDEWKILPKPNLHRDVNRFGHSAVVINGSMYIFGGFSSVLLNDILVYKPPNCKAFRDEELCKNAGPGIKCVWNKNHCESWESGNTNNILRAKCPPKTAASDDRCYRYADCASCTANTNGCQWCDDKKCISANSNCSMSVKNYTKCHVRNEQICNKLTSCKSCSLNLNCQWDQRQQECQALPAHLCGEGWSHIGDACLRVNSSRENYDNAKLYCYNLSGNLASLTTSKEVEFVLDEIQKYTQQKVSPWVGLRKINISYWGWEDMSPFTNTTLQWLPGEPNDSGFCAYLERAAVAGLKANPCTSMANGLVCEKPVVSPNQNARPCKKPCSLRTSCSNCTSNGMECMWCSSTKRCVDSNAYIISFPYGQCLEWQTATCSPQNCSGLRTCGQCLEQPGCGWCNDPSNTGRGHCIEGSSRGPMKLIGMHHSEMVLDTNLCPKEKNYEWSFIQCPACQCNGHSTCINNNVCEQCKNLTTGKQCQDCMPGYYGDPTNGGQCTACTCSGHANICHLHTGKCFCTTKGIKGDQCQLCDSENRYVGNPLRGTCYYSLLIDYQFTFSLLQEDDRHHTAINFIANPEQSNKNLDISINASNNFNLNITWSVGSTAGTISGEETSIVSKNNIKEYRDSFSYEKFNFRSNPNITFYVYVSNFSWPIKIQIAFSQHNTIMDLVQFFVTFFSCFLSLLLVAAVVWKIKQTCWASRRREQLLRERQQMASRPFASVDVALEVGAEQTEFLRGPLEGAPKPIAIEPCAGNRAAVLTVFLCLPRGSSGAPPPGQSGLAIASALIDISQQKASDSKDKTSGVRNRKHLSTRQGTCV</sequence>
<organism>
    <name type="scientific">Homo sapiens</name>
    <name type="common">Human</name>
    <dbReference type="NCBI Taxonomy" id="9606"/>
    <lineage>
        <taxon>Eukaryota</taxon>
        <taxon>Metazoa</taxon>
        <taxon>Chordata</taxon>
        <taxon>Craniata</taxon>
        <taxon>Vertebrata</taxon>
        <taxon>Euteleostomi</taxon>
        <taxon>Mammalia</taxon>
        <taxon>Eutheria</taxon>
        <taxon>Euarchontoglires</taxon>
        <taxon>Primates</taxon>
        <taxon>Haplorrhini</taxon>
        <taxon>Catarrhini</taxon>
        <taxon>Hominidae</taxon>
        <taxon>Homo</taxon>
    </lineage>
</organism>
<reference key="1">
    <citation type="submission" date="2003-10" db="EMBL/GenBank/DDBJ databases">
        <title>Attractin-like peptides.</title>
        <authorList>
            <person name="Milton N.G.N."/>
        </authorList>
    </citation>
    <scope>NUCLEOTIDE SEQUENCE [MRNA] (ISOFORM 1)</scope>
</reference>
<reference key="2">
    <citation type="journal article" date="2004" name="Nature">
        <title>The DNA sequence and comparative analysis of human chromosome 10.</title>
        <authorList>
            <person name="Deloukas P."/>
            <person name="Earthrowl M.E."/>
            <person name="Grafham D.V."/>
            <person name="Rubenfield M."/>
            <person name="French L."/>
            <person name="Steward C.A."/>
            <person name="Sims S.K."/>
            <person name="Jones M.C."/>
            <person name="Searle S."/>
            <person name="Scott C."/>
            <person name="Howe K."/>
            <person name="Hunt S.E."/>
            <person name="Andrews T.D."/>
            <person name="Gilbert J.G.R."/>
            <person name="Swarbreck D."/>
            <person name="Ashurst J.L."/>
            <person name="Taylor A."/>
            <person name="Battles J."/>
            <person name="Bird C.P."/>
            <person name="Ainscough R."/>
            <person name="Almeida J.P."/>
            <person name="Ashwell R.I.S."/>
            <person name="Ambrose K.D."/>
            <person name="Babbage A.K."/>
            <person name="Bagguley C.L."/>
            <person name="Bailey J."/>
            <person name="Banerjee R."/>
            <person name="Bates K."/>
            <person name="Beasley H."/>
            <person name="Bray-Allen S."/>
            <person name="Brown A.J."/>
            <person name="Brown J.Y."/>
            <person name="Burford D.C."/>
            <person name="Burrill W."/>
            <person name="Burton J."/>
            <person name="Cahill P."/>
            <person name="Camire D."/>
            <person name="Carter N.P."/>
            <person name="Chapman J.C."/>
            <person name="Clark S.Y."/>
            <person name="Clarke G."/>
            <person name="Clee C.M."/>
            <person name="Clegg S."/>
            <person name="Corby N."/>
            <person name="Coulson A."/>
            <person name="Dhami P."/>
            <person name="Dutta I."/>
            <person name="Dunn M."/>
            <person name="Faulkner L."/>
            <person name="Frankish A."/>
            <person name="Frankland J.A."/>
            <person name="Garner P."/>
            <person name="Garnett J."/>
            <person name="Gribble S."/>
            <person name="Griffiths C."/>
            <person name="Grocock R."/>
            <person name="Gustafson E."/>
            <person name="Hammond S."/>
            <person name="Harley J.L."/>
            <person name="Hart E."/>
            <person name="Heath P.D."/>
            <person name="Ho T.P."/>
            <person name="Hopkins B."/>
            <person name="Horne J."/>
            <person name="Howden P.J."/>
            <person name="Huckle E."/>
            <person name="Hynds C."/>
            <person name="Johnson C."/>
            <person name="Johnson D."/>
            <person name="Kana A."/>
            <person name="Kay M."/>
            <person name="Kimberley A.M."/>
            <person name="Kershaw J.K."/>
            <person name="Kokkinaki M."/>
            <person name="Laird G.K."/>
            <person name="Lawlor S."/>
            <person name="Lee H.M."/>
            <person name="Leongamornlert D.A."/>
            <person name="Laird G."/>
            <person name="Lloyd C."/>
            <person name="Lloyd D.M."/>
            <person name="Loveland J."/>
            <person name="Lovell J."/>
            <person name="McLaren S."/>
            <person name="McLay K.E."/>
            <person name="McMurray A."/>
            <person name="Mashreghi-Mohammadi M."/>
            <person name="Matthews L."/>
            <person name="Milne S."/>
            <person name="Nickerson T."/>
            <person name="Nguyen M."/>
            <person name="Overton-Larty E."/>
            <person name="Palmer S.A."/>
            <person name="Pearce A.V."/>
            <person name="Peck A.I."/>
            <person name="Pelan S."/>
            <person name="Phillimore B."/>
            <person name="Porter K."/>
            <person name="Rice C.M."/>
            <person name="Rogosin A."/>
            <person name="Ross M.T."/>
            <person name="Sarafidou T."/>
            <person name="Sehra H.K."/>
            <person name="Shownkeen R."/>
            <person name="Skuce C.D."/>
            <person name="Smith M."/>
            <person name="Standring L."/>
            <person name="Sycamore N."/>
            <person name="Tester J."/>
            <person name="Thorpe A."/>
            <person name="Torcasso W."/>
            <person name="Tracey A."/>
            <person name="Tromans A."/>
            <person name="Tsolas J."/>
            <person name="Wall M."/>
            <person name="Walsh J."/>
            <person name="Wang H."/>
            <person name="Weinstock K."/>
            <person name="West A.P."/>
            <person name="Willey D.L."/>
            <person name="Whitehead S.L."/>
            <person name="Wilming L."/>
            <person name="Wray P.W."/>
            <person name="Young L."/>
            <person name="Chen Y."/>
            <person name="Lovering R.C."/>
            <person name="Moschonas N.K."/>
            <person name="Siebert R."/>
            <person name="Fechtel K."/>
            <person name="Bentley D."/>
            <person name="Durbin R.M."/>
            <person name="Hubbard T."/>
            <person name="Doucette-Stamm L."/>
            <person name="Beck S."/>
            <person name="Smith D.R."/>
            <person name="Rogers J."/>
        </authorList>
    </citation>
    <scope>NUCLEOTIDE SEQUENCE [LARGE SCALE GENOMIC DNA]</scope>
</reference>
<reference key="3">
    <citation type="journal article" date="2004" name="Genome Res.">
        <title>The status, quality, and expansion of the NIH full-length cDNA project: the Mammalian Gene Collection (MGC).</title>
        <authorList>
            <consortium name="The MGC Project Team"/>
        </authorList>
    </citation>
    <scope>NUCLEOTIDE SEQUENCE [LARGE SCALE MRNA] (ISOFORM 2)</scope>
    <source>
        <tissue>Brain</tissue>
    </source>
</reference>
<reference key="4">
    <citation type="journal article" date="2004" name="Nat. Genet.">
        <title>Complete sequencing and characterization of 21,243 full-length human cDNAs.</title>
        <authorList>
            <person name="Ota T."/>
            <person name="Suzuki Y."/>
            <person name="Nishikawa T."/>
            <person name="Otsuki T."/>
            <person name="Sugiyama T."/>
            <person name="Irie R."/>
            <person name="Wakamatsu A."/>
            <person name="Hayashi K."/>
            <person name="Sato H."/>
            <person name="Nagai K."/>
            <person name="Kimura K."/>
            <person name="Makita H."/>
            <person name="Sekine M."/>
            <person name="Obayashi M."/>
            <person name="Nishi T."/>
            <person name="Shibahara T."/>
            <person name="Tanaka T."/>
            <person name="Ishii S."/>
            <person name="Yamamoto J."/>
            <person name="Saito K."/>
            <person name="Kawai Y."/>
            <person name="Isono Y."/>
            <person name="Nakamura Y."/>
            <person name="Nagahari K."/>
            <person name="Murakami K."/>
            <person name="Yasuda T."/>
            <person name="Iwayanagi T."/>
            <person name="Wagatsuma M."/>
            <person name="Shiratori A."/>
            <person name="Sudo H."/>
            <person name="Hosoiri T."/>
            <person name="Kaku Y."/>
            <person name="Kodaira H."/>
            <person name="Kondo H."/>
            <person name="Sugawara M."/>
            <person name="Takahashi M."/>
            <person name="Kanda K."/>
            <person name="Yokoi T."/>
            <person name="Furuya T."/>
            <person name="Kikkawa E."/>
            <person name="Omura Y."/>
            <person name="Abe K."/>
            <person name="Kamihara K."/>
            <person name="Katsuta N."/>
            <person name="Sato K."/>
            <person name="Tanikawa M."/>
            <person name="Yamazaki M."/>
            <person name="Ninomiya K."/>
            <person name="Ishibashi T."/>
            <person name="Yamashita H."/>
            <person name="Murakawa K."/>
            <person name="Fujimori K."/>
            <person name="Tanai H."/>
            <person name="Kimata M."/>
            <person name="Watanabe M."/>
            <person name="Hiraoka S."/>
            <person name="Chiba Y."/>
            <person name="Ishida S."/>
            <person name="Ono Y."/>
            <person name="Takiguchi S."/>
            <person name="Watanabe S."/>
            <person name="Yosida M."/>
            <person name="Hotuta T."/>
            <person name="Kusano J."/>
            <person name="Kanehori K."/>
            <person name="Takahashi-Fujii A."/>
            <person name="Hara H."/>
            <person name="Tanase T.-O."/>
            <person name="Nomura Y."/>
            <person name="Togiya S."/>
            <person name="Komai F."/>
            <person name="Hara R."/>
            <person name="Takeuchi K."/>
            <person name="Arita M."/>
            <person name="Imose N."/>
            <person name="Musashino K."/>
            <person name="Yuuki H."/>
            <person name="Oshima A."/>
            <person name="Sasaki N."/>
            <person name="Aotsuka S."/>
            <person name="Yoshikawa Y."/>
            <person name="Matsunawa H."/>
            <person name="Ichihara T."/>
            <person name="Shiohata N."/>
            <person name="Sano S."/>
            <person name="Moriya S."/>
            <person name="Momiyama H."/>
            <person name="Satoh N."/>
            <person name="Takami S."/>
            <person name="Terashima Y."/>
            <person name="Suzuki O."/>
            <person name="Nakagawa S."/>
            <person name="Senoh A."/>
            <person name="Mizoguchi H."/>
            <person name="Goto Y."/>
            <person name="Shimizu F."/>
            <person name="Wakebe H."/>
            <person name="Hishigaki H."/>
            <person name="Watanabe T."/>
            <person name="Sugiyama A."/>
            <person name="Takemoto M."/>
            <person name="Kawakami B."/>
            <person name="Yamazaki M."/>
            <person name="Watanabe K."/>
            <person name="Kumagai A."/>
            <person name="Itakura S."/>
            <person name="Fukuzumi Y."/>
            <person name="Fujimori Y."/>
            <person name="Komiyama M."/>
            <person name="Tashiro H."/>
            <person name="Tanigami A."/>
            <person name="Fujiwara T."/>
            <person name="Ono T."/>
            <person name="Yamada K."/>
            <person name="Fujii Y."/>
            <person name="Ozaki K."/>
            <person name="Hirao M."/>
            <person name="Ohmori Y."/>
            <person name="Kawabata A."/>
            <person name="Hikiji T."/>
            <person name="Kobatake N."/>
            <person name="Inagaki H."/>
            <person name="Ikema Y."/>
            <person name="Okamoto S."/>
            <person name="Okitani R."/>
            <person name="Kawakami T."/>
            <person name="Noguchi S."/>
            <person name="Itoh T."/>
            <person name="Shigeta K."/>
            <person name="Senba T."/>
            <person name="Matsumura K."/>
            <person name="Nakajima Y."/>
            <person name="Mizuno T."/>
            <person name="Morinaga M."/>
            <person name="Sasaki M."/>
            <person name="Togashi T."/>
            <person name="Oyama M."/>
            <person name="Hata H."/>
            <person name="Watanabe M."/>
            <person name="Komatsu T."/>
            <person name="Mizushima-Sugano J."/>
            <person name="Satoh T."/>
            <person name="Shirai Y."/>
            <person name="Takahashi Y."/>
            <person name="Nakagawa K."/>
            <person name="Okumura K."/>
            <person name="Nagase T."/>
            <person name="Nomura N."/>
            <person name="Kikuchi H."/>
            <person name="Masuho Y."/>
            <person name="Yamashita R."/>
            <person name="Nakai K."/>
            <person name="Yada T."/>
            <person name="Nakamura Y."/>
            <person name="Ohara O."/>
            <person name="Isogai T."/>
            <person name="Sugano S."/>
        </authorList>
    </citation>
    <scope>NUCLEOTIDE SEQUENCE [LARGE SCALE MRNA] OF 47-1379 (ISOFORM 1)</scope>
    <scope>VARIANT ASN-989</scope>
    <source>
        <tissue>Hippocampus</tissue>
    </source>
</reference>
<reference key="5">
    <citation type="journal article" date="1998" name="DNA Res.">
        <title>Prediction of the coding sequences of unidentified human genes. IX. The complete sequences of 100 new cDNA clones from brain which can code for large proteins in vitro.</title>
        <authorList>
            <person name="Nagase T."/>
            <person name="Ishikawa K."/>
            <person name="Miyajima N."/>
            <person name="Tanaka A."/>
            <person name="Kotani H."/>
            <person name="Nomura N."/>
            <person name="Ohara O."/>
        </authorList>
    </citation>
    <scope>NUCLEOTIDE SEQUENCE [LARGE SCALE MRNA] OF 352-1379 (ISOFORM 1)</scope>
    <scope>VARIANT ASN-989</scope>
    <source>
        <tissue>Brain</tissue>
    </source>
</reference>
<reference key="6">
    <citation type="journal article" date="2002" name="DNA Res.">
        <title>Construction of expression-ready cDNA clones for KIAA genes: manual curation of 330 KIAA cDNA clones.</title>
        <authorList>
            <person name="Nakajima D."/>
            <person name="Okazaki N."/>
            <person name="Yamakawa H."/>
            <person name="Kikuno R."/>
            <person name="Ohara O."/>
            <person name="Nagase T."/>
        </authorList>
    </citation>
    <scope>SEQUENCE REVISION</scope>
</reference>
<comment type="function">
    <text evidence="1">May play a role in melanocortin signaling pathways that regulate energy homeostasis.</text>
</comment>
<comment type="subunit">
    <text evidence="1">Interacts with MC4R.</text>
</comment>
<comment type="subcellular location">
    <subcellularLocation>
        <location evidence="11">Membrane</location>
        <topology evidence="11">Single-pass type I membrane protein</topology>
    </subcellularLocation>
</comment>
<comment type="alternative products">
    <event type="alternative splicing"/>
    <isoform>
        <id>Q5VV63-1</id>
        <name>1</name>
        <sequence type="displayed"/>
    </isoform>
    <isoform>
        <id>Q5VV63-2</id>
        <name>2</name>
        <sequence type="described" ref="VSP_033718 VSP_033719"/>
    </isoform>
</comment>
<comment type="sequence caution" evidence="11">
    <conflict type="erroneous initiation">
        <sequence resource="EMBL-CDS" id="BAC86914"/>
    </conflict>
</comment>